<accession>Q70KH6</accession>
<protein>
    <recommendedName>
        <fullName evidence="6">Luteothin monooxygenase</fullName>
        <ecNumber evidence="2 3 8">1.14.15.37</ecNumber>
    </recommendedName>
    <alternativeName>
        <fullName evidence="5">Bifunctional cytochrome P450 monooxygenase</fullName>
    </alternativeName>
</protein>
<reference evidence="11" key="1">
    <citation type="journal article" date="2003" name="Chem. Biol.">
        <title>Iteration as programmed event during polyketide assembly; molecular analysis of the aureothin biosynthesis gene cluster.</title>
        <authorList>
            <person name="He J."/>
            <person name="Hertweck C."/>
        </authorList>
    </citation>
    <scope>NUCLEOTIDE SEQUENCE [GENOMIC DNA]</scope>
    <source>
        <strain>HKI-227</strain>
    </source>
</reference>
<reference key="2">
    <citation type="journal article" date="2004" name="J. Am. Chem. Soc.">
        <title>Formation of the aureothin tetrahydrofuran ring by a bifunctional cytochrome p450 monooxygenase.</title>
        <authorList>
            <person name="He J."/>
            <person name="Mueller M."/>
            <person name="Hertweck C."/>
        </authorList>
    </citation>
    <scope>FUNCTION</scope>
    <scope>DISRUPTION PHENOTYPE</scope>
</reference>
<reference key="3">
    <citation type="journal article" date="2008" name="Angew. Chem. Int. Ed.">
        <title>Sequential asymmetric polyketide heterocyclization catalyzed by a single cytochrome P450 monooxygenase (AurH).</title>
        <authorList>
            <person name="Richter M.E."/>
            <person name="Traitcheva N."/>
            <person name="Knuepfer U."/>
            <person name="Hertweck C."/>
        </authorList>
    </citation>
    <scope>FUNCTION</scope>
    <scope>CATALYTIC ACTIVITY</scope>
    <scope>REACTION MECHANISM</scope>
</reference>
<reference evidence="12 13 14 15" key="4">
    <citation type="journal article" date="2011" name="J. Am. Chem. Soc.">
        <title>Structural fine-tuning of a multifunctional cytochrome P450 monooxygenase.</title>
        <authorList>
            <person name="Zocher G."/>
            <person name="Richter M.E."/>
            <person name="Mueller U."/>
            <person name="Hertweck C."/>
        </authorList>
    </citation>
    <scope>X-RAY CRYSTALLOGRAPHY (1.54 ANGSTROMS) IN COMPLEXES WITH HEME B AND IN COMPLEX WITH THE P450 INHIBITOR ANCYMIDOL</scope>
    <scope>FUNCTION</scope>
    <scope>CATALYTIC ACTIVITY</scope>
    <scope>REACTION MECHANISM</scope>
    <scope>COFACTOR</scope>
    <scope>SUBUNIT</scope>
    <scope>DOMAIN</scope>
    <scope>MUTAGENESIS OF PHE-89; GLN-91; LEU-175; LEU-179; THR-239; LEU-290 AND PHE-316</scope>
</reference>
<name>AURH_STRTU</name>
<sequence>MSTTAHTEPSWADLPFLDFTDPNFSWDSPEVAEAREKSWIARTPLALLVLRYAEADQLARDKRLISGFRGLVDMVGTPEGPVRDFMVDFLQSLDGADHRRLRGLATHPFTPRRITAVQPFVRSTVEQLIDKLPQGDFDFVQHFPHPLPALVMCQLLGFPLEDYDTVGRLSIETNLGLALSNDQDILVKVEQGLGRMFDYLVAAIEKRKVEPGDDLTSDIVRAFHDGVLDDYELRTLVATVLVAGYETTNHQLALAMYDFAQHPDQWMKIKENPELAPQAVEEVLRWSPTLPVTATRVAAEDFEVNGVRIPTGTPVFMCAHVAHRDPRVFADADRFDITVKREAPSIAFGGGPHFCLGTALARLELTEAVAALATRLDPPQIAGEITWRHELGVAGPDALPLRFGAA</sequence>
<comment type="function">
    <text evidence="1 2 3">Bifunctional cytochrome P450 protein involved in the biosynthesis of the antibiotic aureothin, a nitroaryl polyketide metabolite with antifungal, cytotoxic and insecticidal activities (PubMed:15612710, PubMed:18855960). Catalyzes the hydroxylation of luteothin (also called deoxyaureothin), leading to the formation of the intermediate (7R)-7-hydroxydeoxyaureothin, followed by the formation of the aureothin tetrahydrofuran ring, the final step in the biosynthesis of aureothin (PubMed:15612710, PubMed:18855960, PubMed:21280577).</text>
</comment>
<comment type="catalytic activity">
    <reaction evidence="2 3 8">
        <text>luteothin + 4 reduced [2Fe-2S]-[ferredoxin] + 2 O2 + 4 H(+) = aureothin + 4 oxidized [2Fe-2S]-[ferredoxin] + 3 H2O</text>
        <dbReference type="Rhea" id="RHEA:58824"/>
        <dbReference type="Rhea" id="RHEA-COMP:10000"/>
        <dbReference type="Rhea" id="RHEA-COMP:10001"/>
        <dbReference type="ChEBI" id="CHEBI:15377"/>
        <dbReference type="ChEBI" id="CHEBI:15378"/>
        <dbReference type="ChEBI" id="CHEBI:15379"/>
        <dbReference type="ChEBI" id="CHEBI:33737"/>
        <dbReference type="ChEBI" id="CHEBI:33738"/>
        <dbReference type="ChEBI" id="CHEBI:80024"/>
        <dbReference type="ChEBI" id="CHEBI:142840"/>
        <dbReference type="EC" id="1.14.15.37"/>
    </reaction>
    <physiologicalReaction direction="left-to-right" evidence="8 9 10">
        <dbReference type="Rhea" id="RHEA:58825"/>
    </physiologicalReaction>
</comment>
<comment type="cofactor">
    <cofactor evidence="3">
        <name>heme b</name>
        <dbReference type="ChEBI" id="CHEBI:60344"/>
    </cofactor>
</comment>
<comment type="pathway">
    <text evidence="7 8 9">Antibiotic biosynthesis.</text>
</comment>
<comment type="pathway">
    <text evidence="7 8 9">Polyketide biosynthesis.</text>
</comment>
<comment type="subunit">
    <text evidence="3">Monomer.</text>
</comment>
<comment type="domain">
    <text evidence="3">The hydroxylated intermediate probably changes its conformation in the binding site due to a sterical switch of the enzyme, thus allowing the second oxygenation-heterocyclization step.</text>
</comment>
<comment type="disruption phenotype">
    <text evidence="1">Inactivation of the gene yields a mutant that cannot produce aureothin (PubMed:15612710). The mutant produces luteothin (also called deoxyaureothin), a metabolite that exhibits a significantly improved cytotoxicity against leukemia cells compared to aureothin (PubMed:15612710).</text>
</comment>
<comment type="similarity">
    <text evidence="6">Belongs to the cytochrome P450 family.</text>
</comment>
<keyword id="KW-0002">3D-structure</keyword>
<keyword id="KW-0045">Antibiotic biosynthesis</keyword>
<keyword id="KW-0349">Heme</keyword>
<keyword id="KW-0408">Iron</keyword>
<keyword id="KW-0479">Metal-binding</keyword>
<keyword id="KW-0503">Monooxygenase</keyword>
<keyword id="KW-0560">Oxidoreductase</keyword>
<evidence type="ECO:0000269" key="1">
    <source>
    </source>
</evidence>
<evidence type="ECO:0000269" key="2">
    <source>
    </source>
</evidence>
<evidence type="ECO:0000269" key="3">
    <source>
    </source>
</evidence>
<evidence type="ECO:0000303" key="4">
    <source>
    </source>
</evidence>
<evidence type="ECO:0000303" key="5">
    <source>
    </source>
</evidence>
<evidence type="ECO:0000305" key="6"/>
<evidence type="ECO:0000305" key="7">
    <source>
    </source>
</evidence>
<evidence type="ECO:0000305" key="8">
    <source>
    </source>
</evidence>
<evidence type="ECO:0000305" key="9">
    <source>
    </source>
</evidence>
<evidence type="ECO:0000305" key="10">
    <source>
    </source>
</evidence>
<evidence type="ECO:0000312" key="11">
    <source>
        <dbReference type="EMBL" id="CAE02604.1"/>
    </source>
</evidence>
<evidence type="ECO:0007744" key="12">
    <source>
        <dbReference type="PDB" id="3P3L"/>
    </source>
</evidence>
<evidence type="ECO:0007744" key="13">
    <source>
        <dbReference type="PDB" id="3P3O"/>
    </source>
</evidence>
<evidence type="ECO:0007744" key="14">
    <source>
        <dbReference type="PDB" id="3P3X"/>
    </source>
</evidence>
<evidence type="ECO:0007744" key="15">
    <source>
        <dbReference type="PDB" id="3P3Z"/>
    </source>
</evidence>
<evidence type="ECO:0007829" key="16">
    <source>
        <dbReference type="PDB" id="3P3L"/>
    </source>
</evidence>
<evidence type="ECO:0007829" key="17">
    <source>
        <dbReference type="PDB" id="3P3O"/>
    </source>
</evidence>
<evidence type="ECO:0007829" key="18">
    <source>
        <dbReference type="PDB" id="3P3X"/>
    </source>
</evidence>
<proteinExistence type="evidence at protein level"/>
<dbReference type="EC" id="1.14.15.37" evidence="2 3 8"/>
<dbReference type="EMBL" id="AJ575648">
    <property type="protein sequence ID" value="CAE02604.1"/>
    <property type="molecule type" value="Genomic_DNA"/>
</dbReference>
<dbReference type="PDB" id="3P3L">
    <property type="method" value="X-ray"/>
    <property type="resolution" value="2.10 A"/>
    <property type="chains" value="A/B=1-406"/>
</dbReference>
<dbReference type="PDB" id="3P3O">
    <property type="method" value="X-ray"/>
    <property type="resolution" value="1.54 A"/>
    <property type="chains" value="A=1-406"/>
</dbReference>
<dbReference type="PDB" id="3P3X">
    <property type="method" value="X-ray"/>
    <property type="resolution" value="2.30 A"/>
    <property type="chains" value="A/B=1-406"/>
</dbReference>
<dbReference type="PDB" id="3P3Z">
    <property type="method" value="X-ray"/>
    <property type="resolution" value="2.30 A"/>
    <property type="chains" value="A=1-406"/>
</dbReference>
<dbReference type="PDBsum" id="3P3L"/>
<dbReference type="PDBsum" id="3P3O"/>
<dbReference type="PDBsum" id="3P3X"/>
<dbReference type="PDBsum" id="3P3Z"/>
<dbReference type="SMR" id="Q70KH6"/>
<dbReference type="KEGG" id="ag:CAE02604"/>
<dbReference type="BioCyc" id="MetaCyc:MONOMER-20706"/>
<dbReference type="BRENDA" id="1.14.15.37">
    <property type="organism ID" value="12297"/>
</dbReference>
<dbReference type="EvolutionaryTrace" id="Q70KH6"/>
<dbReference type="GO" id="GO:0020037">
    <property type="term" value="F:heme binding"/>
    <property type="evidence" value="ECO:0007669"/>
    <property type="project" value="InterPro"/>
</dbReference>
<dbReference type="GO" id="GO:0005506">
    <property type="term" value="F:iron ion binding"/>
    <property type="evidence" value="ECO:0007669"/>
    <property type="project" value="InterPro"/>
</dbReference>
<dbReference type="GO" id="GO:0004497">
    <property type="term" value="F:monooxygenase activity"/>
    <property type="evidence" value="ECO:0007669"/>
    <property type="project" value="UniProtKB-KW"/>
</dbReference>
<dbReference type="GO" id="GO:0016705">
    <property type="term" value="F:oxidoreductase activity, acting on paired donors, with incorporation or reduction of molecular oxygen"/>
    <property type="evidence" value="ECO:0007669"/>
    <property type="project" value="InterPro"/>
</dbReference>
<dbReference type="GO" id="GO:0017000">
    <property type="term" value="P:antibiotic biosynthetic process"/>
    <property type="evidence" value="ECO:0007669"/>
    <property type="project" value="UniProtKB-KW"/>
</dbReference>
<dbReference type="CDD" id="cd11038">
    <property type="entry name" value="CYP_AurH-like"/>
    <property type="match status" value="1"/>
</dbReference>
<dbReference type="FunFam" id="1.10.630.10:FF:000018">
    <property type="entry name" value="Cytochrome P450 monooxygenase"/>
    <property type="match status" value="1"/>
</dbReference>
<dbReference type="Gene3D" id="1.10.630.10">
    <property type="entry name" value="Cytochrome P450"/>
    <property type="match status" value="1"/>
</dbReference>
<dbReference type="InterPro" id="IPR001128">
    <property type="entry name" value="Cyt_P450"/>
</dbReference>
<dbReference type="InterPro" id="IPR002397">
    <property type="entry name" value="Cyt_P450_B"/>
</dbReference>
<dbReference type="InterPro" id="IPR017972">
    <property type="entry name" value="Cyt_P450_CS"/>
</dbReference>
<dbReference type="InterPro" id="IPR036396">
    <property type="entry name" value="Cyt_P450_sf"/>
</dbReference>
<dbReference type="PANTHER" id="PTHR46696:SF1">
    <property type="entry name" value="CYTOCHROME P450 YJIB-RELATED"/>
    <property type="match status" value="1"/>
</dbReference>
<dbReference type="PANTHER" id="PTHR46696">
    <property type="entry name" value="P450, PUTATIVE (EUROFUNG)-RELATED"/>
    <property type="match status" value="1"/>
</dbReference>
<dbReference type="Pfam" id="PF00067">
    <property type="entry name" value="p450"/>
    <property type="match status" value="1"/>
</dbReference>
<dbReference type="PRINTS" id="PR00359">
    <property type="entry name" value="BP450"/>
</dbReference>
<dbReference type="PRINTS" id="PR00385">
    <property type="entry name" value="P450"/>
</dbReference>
<dbReference type="SUPFAM" id="SSF48264">
    <property type="entry name" value="Cytochrome P450"/>
    <property type="match status" value="1"/>
</dbReference>
<dbReference type="PROSITE" id="PS00086">
    <property type="entry name" value="CYTOCHROME_P450"/>
    <property type="match status" value="1"/>
</dbReference>
<gene>
    <name evidence="4" type="primary">aurH</name>
</gene>
<organism>
    <name type="scientific">Streptomyces thioluteus</name>
    <dbReference type="NCBI Taxonomy" id="66431"/>
    <lineage>
        <taxon>Bacteria</taxon>
        <taxon>Bacillati</taxon>
        <taxon>Actinomycetota</taxon>
        <taxon>Actinomycetes</taxon>
        <taxon>Kitasatosporales</taxon>
        <taxon>Streptomycetaceae</taxon>
        <taxon>Streptomyces</taxon>
    </lineage>
</organism>
<feature type="chain" id="PRO_0000461564" description="Luteothin monooxygenase">
    <location>
        <begin position="1"/>
        <end position="406"/>
    </location>
</feature>
<feature type="binding site" evidence="3 12 13">
    <location>
        <position position="98"/>
    </location>
    <ligand>
        <name>heme b</name>
        <dbReference type="ChEBI" id="CHEBI:60344"/>
    </ligand>
</feature>
<feature type="binding site" evidence="3 12 13 14">
    <location>
        <position position="102"/>
    </location>
    <ligand>
        <name>heme b</name>
        <dbReference type="ChEBI" id="CHEBI:60344"/>
    </ligand>
</feature>
<feature type="binding site" evidence="3 12 13 14">
    <location>
        <position position="296"/>
    </location>
    <ligand>
        <name>heme b</name>
        <dbReference type="ChEBI" id="CHEBI:60344"/>
    </ligand>
</feature>
<feature type="binding site" evidence="3 12 13 14">
    <location>
        <position position="350"/>
    </location>
    <ligand>
        <name>heme b</name>
        <dbReference type="ChEBI" id="CHEBI:60344"/>
    </ligand>
</feature>
<feature type="binding site" evidence="3 12 13 14">
    <location>
        <position position="353"/>
    </location>
    <ligand>
        <name>heme b</name>
        <dbReference type="ChEBI" id="CHEBI:60344"/>
    </ligand>
</feature>
<feature type="binding site" description="axial binding residue" evidence="3 12 13 14">
    <location>
        <position position="355"/>
    </location>
    <ligand>
        <name>heme b</name>
        <dbReference type="ChEBI" id="CHEBI:60344"/>
    </ligand>
    <ligandPart>
        <name>Fe</name>
        <dbReference type="ChEBI" id="CHEBI:18248"/>
    </ligandPart>
</feature>
<feature type="mutagenesis site" description="Hydroxylation at C-7 is still observed at reasonable rates, but formation of the tetrahydrofuran ring is almost completely lost. Exhibits a change in regioselectivity and is capable of C-9a hydroxylation." evidence="3">
    <original>F</original>
    <variation>W</variation>
    <location>
        <position position="89"/>
    </location>
</feature>
<feature type="mutagenesis site" description="Loss of activity." evidence="3">
    <original>Q</original>
    <variation>L</variation>
    <location>
        <position position="91"/>
    </location>
</feature>
<feature type="mutagenesis site" description="Decreases the catalytic activity for both hydroxylation at C-7 and formation of the tetrahydrofuran ring." evidence="3">
    <original>L</original>
    <variation>W</variation>
    <location>
        <position position="175"/>
    </location>
</feature>
<feature type="mutagenesis site" description="Decreases the catalytic activity for both hydroxylation at C-7 and formation of the tetrahydrofuran ring." evidence="3">
    <original>L</original>
    <variation>W</variation>
    <location>
        <position position="179"/>
    </location>
</feature>
<feature type="mutagenesis site" description="Shows low hydroxylation at C-7, but formation of the tetrahydrofuran ring is lost." evidence="3">
    <original>T</original>
    <variation>A</variation>
    <location>
        <position position="239"/>
    </location>
</feature>
<feature type="mutagenesis site" description="Shows low hydroxylation at C-7, but formation of the tetrahydrofuran ring is lost. Exhibits a change in regioselectivity and is capable of C-9a hydroxylation." evidence="3">
    <original>T</original>
    <variation>F</variation>
    <location>
        <position position="239"/>
    </location>
</feature>
<feature type="mutagenesis site" description="Decreases the catalytic activity for both hydroxylation at C-7 and formation of the tetrahydrofuran ring." evidence="3">
    <original>L</original>
    <variation>A</variation>
    <location>
        <position position="290"/>
    </location>
</feature>
<feature type="mutagenesis site" description="Decreases the catalytic activity for both hydroxylation at C-7 and formation of the tetrahydrofuran ring." evidence="3">
    <original>F</original>
    <variation>A</variation>
    <location>
        <position position="316"/>
    </location>
</feature>
<feature type="helix" evidence="17">
    <location>
        <begin position="1"/>
        <end position="5"/>
    </location>
</feature>
<feature type="helix" evidence="17">
    <location>
        <begin position="9"/>
        <end position="11"/>
    </location>
</feature>
<feature type="strand" evidence="16">
    <location>
        <begin position="19"/>
        <end position="21"/>
    </location>
</feature>
<feature type="helix" evidence="17">
    <location>
        <begin position="29"/>
        <end position="37"/>
    </location>
</feature>
<feature type="strand" evidence="17">
    <location>
        <begin position="39"/>
        <end position="42"/>
    </location>
</feature>
<feature type="strand" evidence="17">
    <location>
        <begin position="44"/>
        <end position="49"/>
    </location>
</feature>
<feature type="helix" evidence="17">
    <location>
        <begin position="52"/>
        <end position="60"/>
    </location>
</feature>
<feature type="strand" evidence="16">
    <location>
        <begin position="64"/>
        <end position="66"/>
    </location>
</feature>
<feature type="helix" evidence="17">
    <location>
        <begin position="68"/>
        <end position="75"/>
    </location>
</feature>
<feature type="helix" evidence="17">
    <location>
        <begin position="81"/>
        <end position="88"/>
    </location>
</feature>
<feature type="helix" evidence="17">
    <location>
        <begin position="90"/>
        <end position="92"/>
    </location>
</feature>
<feature type="helix" evidence="17">
    <location>
        <begin position="95"/>
        <end position="103"/>
    </location>
</feature>
<feature type="helix" evidence="17">
    <location>
        <begin position="107"/>
        <end position="109"/>
    </location>
</feature>
<feature type="helix" evidence="17">
    <location>
        <begin position="111"/>
        <end position="130"/>
    </location>
</feature>
<feature type="strand" evidence="17">
    <location>
        <begin position="134"/>
        <end position="138"/>
    </location>
</feature>
<feature type="helix" evidence="17">
    <location>
        <begin position="139"/>
        <end position="142"/>
    </location>
</feature>
<feature type="turn" evidence="17">
    <location>
        <begin position="143"/>
        <end position="145"/>
    </location>
</feature>
<feature type="helix" evidence="17">
    <location>
        <begin position="146"/>
        <end position="156"/>
    </location>
</feature>
<feature type="helix" evidence="17">
    <location>
        <begin position="160"/>
        <end position="162"/>
    </location>
</feature>
<feature type="helix" evidence="17">
    <location>
        <begin position="163"/>
        <end position="171"/>
    </location>
</feature>
<feature type="helix" evidence="17">
    <location>
        <begin position="175"/>
        <end position="177"/>
    </location>
</feature>
<feature type="strand" evidence="18">
    <location>
        <begin position="179"/>
        <end position="181"/>
    </location>
</feature>
<feature type="helix" evidence="17">
    <location>
        <begin position="183"/>
        <end position="209"/>
    </location>
</feature>
<feature type="helix" evidence="17">
    <location>
        <begin position="215"/>
        <end position="224"/>
    </location>
</feature>
<feature type="helix" evidence="17">
    <location>
        <begin position="230"/>
        <end position="261"/>
    </location>
</feature>
<feature type="helix" evidence="17">
    <location>
        <begin position="263"/>
        <end position="271"/>
    </location>
</feature>
<feature type="helix" evidence="17">
    <location>
        <begin position="273"/>
        <end position="275"/>
    </location>
</feature>
<feature type="helix" evidence="17">
    <location>
        <begin position="276"/>
        <end position="286"/>
    </location>
</feature>
<feature type="strand" evidence="17">
    <location>
        <begin position="295"/>
        <end position="300"/>
    </location>
</feature>
<feature type="strand" evidence="17">
    <location>
        <begin position="302"/>
        <end position="304"/>
    </location>
</feature>
<feature type="strand" evidence="17">
    <location>
        <begin position="307"/>
        <end position="309"/>
    </location>
</feature>
<feature type="strand" evidence="17">
    <location>
        <begin position="314"/>
        <end position="317"/>
    </location>
</feature>
<feature type="helix" evidence="17">
    <location>
        <begin position="319"/>
        <end position="322"/>
    </location>
</feature>
<feature type="turn" evidence="17">
    <location>
        <begin position="326"/>
        <end position="328"/>
    </location>
</feature>
<feature type="turn" evidence="17">
    <location>
        <begin position="330"/>
        <end position="333"/>
    </location>
</feature>
<feature type="strand" evidence="18">
    <location>
        <begin position="337"/>
        <end position="339"/>
    </location>
</feature>
<feature type="helix" evidence="16">
    <location>
        <begin position="351"/>
        <end position="353"/>
    </location>
</feature>
<feature type="helix" evidence="17">
    <location>
        <begin position="358"/>
        <end position="375"/>
    </location>
</feature>
<feature type="strand" evidence="17">
    <location>
        <begin position="379"/>
        <end position="381"/>
    </location>
</feature>
<feature type="strand" evidence="16">
    <location>
        <begin position="390"/>
        <end position="392"/>
    </location>
</feature>
<feature type="strand" evidence="17">
    <location>
        <begin position="396"/>
        <end position="398"/>
    </location>
</feature>
<feature type="strand" evidence="17">
    <location>
        <begin position="400"/>
        <end position="404"/>
    </location>
</feature>